<protein>
    <recommendedName>
        <fullName>Filamin-binding LIM protein 1</fullName>
        <shortName>FBLP-1</shortName>
    </recommendedName>
    <alternativeName>
        <fullName>CSX-associated LIM</fullName>
    </alternativeName>
</protein>
<name>FBLI1_MOUSE</name>
<keyword id="KW-0130">Cell adhesion</keyword>
<keyword id="KW-0965">Cell junction</keyword>
<keyword id="KW-0133">Cell shape</keyword>
<keyword id="KW-0963">Cytoplasm</keyword>
<keyword id="KW-0206">Cytoskeleton</keyword>
<keyword id="KW-0440">LIM domain</keyword>
<keyword id="KW-0479">Metal-binding</keyword>
<keyword id="KW-1185">Reference proteome</keyword>
<keyword id="KW-0677">Repeat</keyword>
<keyword id="KW-0862">Zinc</keyword>
<dbReference type="EMBL" id="AF513359">
    <property type="protein sequence ID" value="AAQ08090.1"/>
    <property type="molecule type" value="mRNA"/>
</dbReference>
<dbReference type="EMBL" id="AK154680">
    <property type="protein sequence ID" value="BAE32761.1"/>
    <property type="molecule type" value="mRNA"/>
</dbReference>
<dbReference type="EMBL" id="AK170151">
    <property type="protein sequence ID" value="BAE41598.1"/>
    <property type="molecule type" value="mRNA"/>
</dbReference>
<dbReference type="EMBL" id="AK170440">
    <property type="protein sequence ID" value="BAE41798.1"/>
    <property type="molecule type" value="mRNA"/>
</dbReference>
<dbReference type="EMBL" id="AL670446">
    <property type="status" value="NOT_ANNOTATED_CDS"/>
    <property type="molecule type" value="Genomic_DNA"/>
</dbReference>
<dbReference type="EMBL" id="CH466615">
    <property type="protein sequence ID" value="EDL13381.1"/>
    <property type="molecule type" value="Genomic_DNA"/>
</dbReference>
<dbReference type="EMBL" id="CH466615">
    <property type="protein sequence ID" value="EDL13382.1"/>
    <property type="molecule type" value="Genomic_DNA"/>
</dbReference>
<dbReference type="EMBL" id="CH466615">
    <property type="protein sequence ID" value="EDL13383.1"/>
    <property type="molecule type" value="Genomic_DNA"/>
</dbReference>
<dbReference type="EMBL" id="CH466615">
    <property type="protein sequence ID" value="EDL13384.1"/>
    <property type="molecule type" value="Genomic_DNA"/>
</dbReference>
<dbReference type="EMBL" id="CH466615">
    <property type="protein sequence ID" value="EDL13385.1"/>
    <property type="molecule type" value="Genomic_DNA"/>
</dbReference>
<dbReference type="EMBL" id="CH466615">
    <property type="protein sequence ID" value="EDL13386.1"/>
    <property type="molecule type" value="Genomic_DNA"/>
</dbReference>
<dbReference type="EMBL" id="BC004777">
    <property type="protein sequence ID" value="AAH04777.1"/>
    <property type="molecule type" value="mRNA"/>
</dbReference>
<dbReference type="CCDS" id="CCDS18876.1"/>
<dbReference type="RefSeq" id="NP_001156728.1">
    <property type="nucleotide sequence ID" value="NM_001163256.2"/>
</dbReference>
<dbReference type="RefSeq" id="NP_001365887.1">
    <property type="nucleotide sequence ID" value="NM_001378958.2"/>
</dbReference>
<dbReference type="RefSeq" id="NP_001365888.1">
    <property type="nucleotide sequence ID" value="NM_001378959.1"/>
</dbReference>
<dbReference type="RefSeq" id="NP_001391569.1">
    <property type="nucleotide sequence ID" value="NM_001404640.1"/>
</dbReference>
<dbReference type="RefSeq" id="NP_001391570.1">
    <property type="nucleotide sequence ID" value="NM_001404641.1"/>
</dbReference>
<dbReference type="RefSeq" id="NP_001391572.1">
    <property type="nucleotide sequence ID" value="NM_001404643.1"/>
</dbReference>
<dbReference type="RefSeq" id="NP_001391573.1">
    <property type="nucleotide sequence ID" value="NM_001404644.1"/>
</dbReference>
<dbReference type="RefSeq" id="NP_598515.3">
    <property type="nucleotide sequence ID" value="NM_133754.5"/>
</dbReference>
<dbReference type="RefSeq" id="XP_006539277.1">
    <property type="nucleotide sequence ID" value="XM_006539214.4"/>
</dbReference>
<dbReference type="RefSeq" id="XP_006539278.1">
    <property type="nucleotide sequence ID" value="XM_006539215.4"/>
</dbReference>
<dbReference type="RefSeq" id="XP_006539279.1">
    <property type="nucleotide sequence ID" value="XM_006539216.3"/>
</dbReference>
<dbReference type="RefSeq" id="XP_030109701.1">
    <property type="nucleotide sequence ID" value="XM_030253841.1"/>
</dbReference>
<dbReference type="BMRB" id="Q71FD7"/>
<dbReference type="BioGRID" id="216573">
    <property type="interactions" value="2"/>
</dbReference>
<dbReference type="FunCoup" id="Q71FD7">
    <property type="interactions" value="70"/>
</dbReference>
<dbReference type="IntAct" id="Q71FD7">
    <property type="interactions" value="2"/>
</dbReference>
<dbReference type="MINT" id="Q71FD7"/>
<dbReference type="STRING" id="10090.ENSMUSP00000006381"/>
<dbReference type="iPTMnet" id="Q71FD7"/>
<dbReference type="PhosphoSitePlus" id="Q71FD7"/>
<dbReference type="PaxDb" id="10090-ENSMUSP00000101410"/>
<dbReference type="PeptideAtlas" id="Q71FD7"/>
<dbReference type="ProteomicsDB" id="271556"/>
<dbReference type="Pumba" id="Q71FD7"/>
<dbReference type="Antibodypedia" id="14407">
    <property type="antibodies" value="259 antibodies from 29 providers"/>
</dbReference>
<dbReference type="DNASU" id="74202"/>
<dbReference type="Ensembl" id="ENSMUST00000006381.11">
    <property type="protein sequence ID" value="ENSMUSP00000006381.5"/>
    <property type="gene ID" value="ENSMUSG00000006219.13"/>
</dbReference>
<dbReference type="Ensembl" id="ENSMUST00000105784.8">
    <property type="protein sequence ID" value="ENSMUSP00000101410.2"/>
    <property type="gene ID" value="ENSMUSG00000006219.13"/>
</dbReference>
<dbReference type="Ensembl" id="ENSMUST00000105785.9">
    <property type="protein sequence ID" value="ENSMUSP00000101411.3"/>
    <property type="gene ID" value="ENSMUSG00000006219.13"/>
</dbReference>
<dbReference type="GeneID" id="74202"/>
<dbReference type="KEGG" id="mmu:74202"/>
<dbReference type="UCSC" id="uc008vos.2">
    <property type="organism name" value="mouse"/>
</dbReference>
<dbReference type="AGR" id="MGI:1921452"/>
<dbReference type="CTD" id="54751"/>
<dbReference type="MGI" id="MGI:1921452">
    <property type="gene designation" value="Fblim1"/>
</dbReference>
<dbReference type="VEuPathDB" id="HostDB:ENSMUSG00000006219"/>
<dbReference type="eggNOG" id="KOG1701">
    <property type="taxonomic scope" value="Eukaryota"/>
</dbReference>
<dbReference type="GeneTree" id="ENSGT00940000159003"/>
<dbReference type="HOGENOM" id="CLU_062552_0_0_1"/>
<dbReference type="InParanoid" id="Q71FD7"/>
<dbReference type="OMA" id="CEVCVIQ"/>
<dbReference type="OrthoDB" id="25414at2759"/>
<dbReference type="PhylomeDB" id="Q71FD7"/>
<dbReference type="TreeFam" id="TF320310"/>
<dbReference type="Reactome" id="R-MMU-446353">
    <property type="pathway name" value="Cell-extracellular matrix interactions"/>
</dbReference>
<dbReference type="BioGRID-ORCS" id="74202">
    <property type="hits" value="3 hits in 80 CRISPR screens"/>
</dbReference>
<dbReference type="ChiTaRS" id="Fblim1">
    <property type="organism name" value="mouse"/>
</dbReference>
<dbReference type="PRO" id="PR:Q71FD7"/>
<dbReference type="Proteomes" id="UP000000589">
    <property type="component" value="Chromosome 4"/>
</dbReference>
<dbReference type="RNAct" id="Q71FD7">
    <property type="molecule type" value="protein"/>
</dbReference>
<dbReference type="Bgee" id="ENSMUSG00000006219">
    <property type="expression patterns" value="Expressed in interventricular septum and 198 other cell types or tissues"/>
</dbReference>
<dbReference type="ExpressionAtlas" id="Q71FD7">
    <property type="expression patterns" value="baseline and differential"/>
</dbReference>
<dbReference type="GO" id="GO:0071944">
    <property type="term" value="C:cell periphery"/>
    <property type="evidence" value="ECO:0007669"/>
    <property type="project" value="Ensembl"/>
</dbReference>
<dbReference type="GO" id="GO:0005737">
    <property type="term" value="C:cytoplasm"/>
    <property type="evidence" value="ECO:0007669"/>
    <property type="project" value="UniProtKB-KW"/>
</dbReference>
<dbReference type="GO" id="GO:0001650">
    <property type="term" value="C:fibrillar center"/>
    <property type="evidence" value="ECO:0007669"/>
    <property type="project" value="Ensembl"/>
</dbReference>
<dbReference type="GO" id="GO:0005925">
    <property type="term" value="C:focal adhesion"/>
    <property type="evidence" value="ECO:0007669"/>
    <property type="project" value="UniProtKB-SubCell"/>
</dbReference>
<dbReference type="GO" id="GO:0001725">
    <property type="term" value="C:stress fiber"/>
    <property type="evidence" value="ECO:0000250"/>
    <property type="project" value="UniProtKB"/>
</dbReference>
<dbReference type="GO" id="GO:0031005">
    <property type="term" value="F:filamin binding"/>
    <property type="evidence" value="ECO:0000250"/>
    <property type="project" value="UniProtKB"/>
</dbReference>
<dbReference type="GO" id="GO:0046872">
    <property type="term" value="F:metal ion binding"/>
    <property type="evidence" value="ECO:0007669"/>
    <property type="project" value="UniProtKB-KW"/>
</dbReference>
<dbReference type="GO" id="GO:0098609">
    <property type="term" value="P:cell-cell adhesion"/>
    <property type="evidence" value="ECO:0000250"/>
    <property type="project" value="UniProtKB"/>
</dbReference>
<dbReference type="GO" id="GO:0008360">
    <property type="term" value="P:regulation of cell shape"/>
    <property type="evidence" value="ECO:0007669"/>
    <property type="project" value="UniProtKB-KW"/>
</dbReference>
<dbReference type="GO" id="GO:0033623">
    <property type="term" value="P:regulation of integrin activation"/>
    <property type="evidence" value="ECO:0000250"/>
    <property type="project" value="UniProtKB"/>
</dbReference>
<dbReference type="CDD" id="cd09372">
    <property type="entry name" value="LIM2_FBLP-1"/>
    <property type="match status" value="1"/>
</dbReference>
<dbReference type="CDD" id="cd09357">
    <property type="entry name" value="LIM3_Zyxin_like"/>
    <property type="match status" value="1"/>
</dbReference>
<dbReference type="FunFam" id="2.10.110.10:FF:000086">
    <property type="entry name" value="Filamin binding LIM protein 1"/>
    <property type="match status" value="1"/>
</dbReference>
<dbReference type="FunFam" id="2.10.110.10:FF:000088">
    <property type="entry name" value="Filamin binding LIM protein 1"/>
    <property type="match status" value="1"/>
</dbReference>
<dbReference type="FunFam" id="2.10.110.10:FF:000097">
    <property type="entry name" value="Filamin-binding LIM protein 1"/>
    <property type="match status" value="1"/>
</dbReference>
<dbReference type="Gene3D" id="2.10.110.10">
    <property type="entry name" value="Cysteine Rich Protein"/>
    <property type="match status" value="3"/>
</dbReference>
<dbReference type="InterPro" id="IPR001781">
    <property type="entry name" value="Znf_LIM"/>
</dbReference>
<dbReference type="PANTHER" id="PTHR24207:SF1">
    <property type="entry name" value="FILAMIN-BINDING LIM PROTEIN 1"/>
    <property type="match status" value="1"/>
</dbReference>
<dbReference type="PANTHER" id="PTHR24207">
    <property type="entry name" value="ZYX102 PROTEIN"/>
    <property type="match status" value="1"/>
</dbReference>
<dbReference type="Pfam" id="PF00412">
    <property type="entry name" value="LIM"/>
    <property type="match status" value="3"/>
</dbReference>
<dbReference type="SMART" id="SM00132">
    <property type="entry name" value="LIM"/>
    <property type="match status" value="3"/>
</dbReference>
<dbReference type="SUPFAM" id="SSF57716">
    <property type="entry name" value="Glucocorticoid receptor-like (DNA-binding domain)"/>
    <property type="match status" value="2"/>
</dbReference>
<dbReference type="PROSITE" id="PS00478">
    <property type="entry name" value="LIM_DOMAIN_1"/>
    <property type="match status" value="3"/>
</dbReference>
<dbReference type="PROSITE" id="PS50023">
    <property type="entry name" value="LIM_DOMAIN_2"/>
    <property type="match status" value="3"/>
</dbReference>
<gene>
    <name type="primary">Fblim1</name>
    <name type="synonym">Cal</name>
</gene>
<accession>Q71FD7</accession>
<accession>Q3TDK3</accession>
<accession>Q99J35</accession>
<feature type="chain" id="PRO_0000075733" description="Filamin-binding LIM protein 1">
    <location>
        <begin position="1"/>
        <end position="375"/>
    </location>
</feature>
<feature type="domain" description="LIM zinc-binding 1" evidence="3">
    <location>
        <begin position="183"/>
        <end position="244"/>
    </location>
</feature>
<feature type="domain" description="LIM zinc-binding 2" evidence="3">
    <location>
        <begin position="245"/>
        <end position="302"/>
    </location>
</feature>
<feature type="domain" description="LIM zinc-binding 3" evidence="3">
    <location>
        <begin position="303"/>
        <end position="372"/>
    </location>
</feature>
<feature type="region of interest" description="Filamin-binding" evidence="1">
    <location>
        <begin position="1"/>
        <end position="69"/>
    </location>
</feature>
<feature type="region of interest" description="Disordered" evidence="4">
    <location>
        <begin position="40"/>
        <end position="176"/>
    </location>
</feature>
<feature type="region of interest" description="FERMT2-binding" evidence="1">
    <location>
        <begin position="278"/>
        <end position="375"/>
    </location>
</feature>
<feature type="compositionally biased region" description="Polar residues" evidence="4">
    <location>
        <begin position="60"/>
        <end position="83"/>
    </location>
</feature>
<feature type="compositionally biased region" description="Pro residues" evidence="4">
    <location>
        <begin position="98"/>
        <end position="107"/>
    </location>
</feature>
<feature type="compositionally biased region" description="Pro residues" evidence="4">
    <location>
        <begin position="133"/>
        <end position="144"/>
    </location>
</feature>
<feature type="sequence conflict" description="In Ref. 1; AAQ08090." evidence="6" ref="1">
    <original>I</original>
    <variation>R</variation>
    <location>
        <position position="159"/>
    </location>
</feature>
<evidence type="ECO:0000250" key="1"/>
<evidence type="ECO:0000250" key="2">
    <source>
        <dbReference type="UniProtKB" id="Q8WUP2"/>
    </source>
</evidence>
<evidence type="ECO:0000255" key="3">
    <source>
        <dbReference type="PROSITE-ProRule" id="PRU00125"/>
    </source>
</evidence>
<evidence type="ECO:0000256" key="4">
    <source>
        <dbReference type="SAM" id="MobiDB-lite"/>
    </source>
</evidence>
<evidence type="ECO:0000269" key="5">
    <source>
    </source>
</evidence>
<evidence type="ECO:0000305" key="6"/>
<sequence>MASKPEKRVASSVFITLAPPRRDVAVSEEVGQAACEARRARPWEMLPTKTPGAAVGRSPKTWTPSGKTNASLSGVTPQLSNGGCSLPPPSLNEEDLDLPPPPPPPSAYLPLPEEEPPVLPGKSLISDLEQLHLPPPPPPPPPQAPSKGSSVHPPPGHAIPSEEELPPPPEEPVTLPEREVSTDVCGFCHKPVSPRELAVEAMKRQYHAQCFTCRTCRRQLAGQRFYQKDGRPLCEPCYQDTLEKCGKCGEVVQEHVIRALGKAFHPPCFTCVTCARCISDESFALDSQNQVYCVADFYRKFAPVCSICENPIIPRDGKDAFKIECMGRNFHENCYRCEDCSVLLSVEPTDQGCYPLNDHLFCKPCHLKRSAAGCC</sequence>
<organism>
    <name type="scientific">Mus musculus</name>
    <name type="common">Mouse</name>
    <dbReference type="NCBI Taxonomy" id="10090"/>
    <lineage>
        <taxon>Eukaryota</taxon>
        <taxon>Metazoa</taxon>
        <taxon>Chordata</taxon>
        <taxon>Craniata</taxon>
        <taxon>Vertebrata</taxon>
        <taxon>Euteleostomi</taxon>
        <taxon>Mammalia</taxon>
        <taxon>Eutheria</taxon>
        <taxon>Euarchontoglires</taxon>
        <taxon>Glires</taxon>
        <taxon>Rodentia</taxon>
        <taxon>Myomorpha</taxon>
        <taxon>Muroidea</taxon>
        <taxon>Muridae</taxon>
        <taxon>Murinae</taxon>
        <taxon>Mus</taxon>
        <taxon>Mus</taxon>
    </lineage>
</organism>
<comment type="function">
    <text evidence="1">Serves as an anchoring site for cell-ECM adhesion proteins and filamin-containing actin filaments. Is implicated in cell shape modulation (spreading) and motility. May participate in the regulation of filamin-mediated cross-linking and stabilization of actin filaments. May also regulate the assembly of filamin-containing signaling complexes that control actin assembly. Promotes dissociation of FLNA from ITGB3 and ITGB7. Promotes activation of integrins and regulates integrin-mediated cell-cell adhesion (By similarity).</text>
</comment>
<comment type="subunit">
    <text evidence="1 5">Interacts with FERMT2, FLNA, FLNB and FLNC (By similarity). Interacts with NKX2-5.</text>
</comment>
<comment type="interaction">
    <interactant intactId="EBI-8346526">
        <id>Q71FD7</id>
    </interactant>
    <interactant intactId="EBI-936601">
        <id>P52952</id>
        <label>NKX2-5</label>
    </interactant>
    <organismsDiffer>true</organismsDiffer>
    <experiments>4</experiments>
</comment>
<comment type="subcellular location">
    <subcellularLocation>
        <location evidence="2">Cell junction</location>
        <location evidence="2">Focal adhesion</location>
    </subcellularLocation>
    <subcellularLocation>
        <location evidence="2">Cytoplasm</location>
        <location evidence="2">Cytoskeleton</location>
        <location evidence="2">Stress fiber</location>
    </subcellularLocation>
    <text evidence="2">Associated with actin stress fiber at cell-ECM focal adhesion sites. Recruited and localized at actin stress fibers and clustered at cell-EMC adhesion sites through interaction with FERMT2.</text>
</comment>
<reference key="1">
    <citation type="journal article" date="2004" name="J. Cell Biol.">
        <title>A novel LIM protein Cal promotes cardiac differentiation by association with CSX/NKX2-5.</title>
        <authorList>
            <person name="Akazawa H."/>
            <person name="Kudoh S."/>
            <person name="Mochizuki N."/>
            <person name="Takekoshi N."/>
            <person name="Takano H."/>
            <person name="Nagai T."/>
            <person name="Komuro I."/>
        </authorList>
    </citation>
    <scope>NUCLEOTIDE SEQUENCE [MRNA]</scope>
    <scope>INTERACTION WITH NKX2-5</scope>
</reference>
<reference key="2">
    <citation type="journal article" date="2005" name="Science">
        <title>The transcriptional landscape of the mammalian genome.</title>
        <authorList>
            <person name="Carninci P."/>
            <person name="Kasukawa T."/>
            <person name="Katayama S."/>
            <person name="Gough J."/>
            <person name="Frith M.C."/>
            <person name="Maeda N."/>
            <person name="Oyama R."/>
            <person name="Ravasi T."/>
            <person name="Lenhard B."/>
            <person name="Wells C."/>
            <person name="Kodzius R."/>
            <person name="Shimokawa K."/>
            <person name="Bajic V.B."/>
            <person name="Brenner S.E."/>
            <person name="Batalov S."/>
            <person name="Forrest A.R."/>
            <person name="Zavolan M."/>
            <person name="Davis M.J."/>
            <person name="Wilming L.G."/>
            <person name="Aidinis V."/>
            <person name="Allen J.E."/>
            <person name="Ambesi-Impiombato A."/>
            <person name="Apweiler R."/>
            <person name="Aturaliya R.N."/>
            <person name="Bailey T.L."/>
            <person name="Bansal M."/>
            <person name="Baxter L."/>
            <person name="Beisel K.W."/>
            <person name="Bersano T."/>
            <person name="Bono H."/>
            <person name="Chalk A.M."/>
            <person name="Chiu K.P."/>
            <person name="Choudhary V."/>
            <person name="Christoffels A."/>
            <person name="Clutterbuck D.R."/>
            <person name="Crowe M.L."/>
            <person name="Dalla E."/>
            <person name="Dalrymple B.P."/>
            <person name="de Bono B."/>
            <person name="Della Gatta G."/>
            <person name="di Bernardo D."/>
            <person name="Down T."/>
            <person name="Engstrom P."/>
            <person name="Fagiolini M."/>
            <person name="Faulkner G."/>
            <person name="Fletcher C.F."/>
            <person name="Fukushima T."/>
            <person name="Furuno M."/>
            <person name="Futaki S."/>
            <person name="Gariboldi M."/>
            <person name="Georgii-Hemming P."/>
            <person name="Gingeras T.R."/>
            <person name="Gojobori T."/>
            <person name="Green R.E."/>
            <person name="Gustincich S."/>
            <person name="Harbers M."/>
            <person name="Hayashi Y."/>
            <person name="Hensch T.K."/>
            <person name="Hirokawa N."/>
            <person name="Hill D."/>
            <person name="Huminiecki L."/>
            <person name="Iacono M."/>
            <person name="Ikeo K."/>
            <person name="Iwama A."/>
            <person name="Ishikawa T."/>
            <person name="Jakt M."/>
            <person name="Kanapin A."/>
            <person name="Katoh M."/>
            <person name="Kawasawa Y."/>
            <person name="Kelso J."/>
            <person name="Kitamura H."/>
            <person name="Kitano H."/>
            <person name="Kollias G."/>
            <person name="Krishnan S.P."/>
            <person name="Kruger A."/>
            <person name="Kummerfeld S.K."/>
            <person name="Kurochkin I.V."/>
            <person name="Lareau L.F."/>
            <person name="Lazarevic D."/>
            <person name="Lipovich L."/>
            <person name="Liu J."/>
            <person name="Liuni S."/>
            <person name="McWilliam S."/>
            <person name="Madan Babu M."/>
            <person name="Madera M."/>
            <person name="Marchionni L."/>
            <person name="Matsuda H."/>
            <person name="Matsuzawa S."/>
            <person name="Miki H."/>
            <person name="Mignone F."/>
            <person name="Miyake S."/>
            <person name="Morris K."/>
            <person name="Mottagui-Tabar S."/>
            <person name="Mulder N."/>
            <person name="Nakano N."/>
            <person name="Nakauchi H."/>
            <person name="Ng P."/>
            <person name="Nilsson R."/>
            <person name="Nishiguchi S."/>
            <person name="Nishikawa S."/>
            <person name="Nori F."/>
            <person name="Ohara O."/>
            <person name="Okazaki Y."/>
            <person name="Orlando V."/>
            <person name="Pang K.C."/>
            <person name="Pavan W.J."/>
            <person name="Pavesi G."/>
            <person name="Pesole G."/>
            <person name="Petrovsky N."/>
            <person name="Piazza S."/>
            <person name="Reed J."/>
            <person name="Reid J.F."/>
            <person name="Ring B.Z."/>
            <person name="Ringwald M."/>
            <person name="Rost B."/>
            <person name="Ruan Y."/>
            <person name="Salzberg S.L."/>
            <person name="Sandelin A."/>
            <person name="Schneider C."/>
            <person name="Schoenbach C."/>
            <person name="Sekiguchi K."/>
            <person name="Semple C.A."/>
            <person name="Seno S."/>
            <person name="Sessa L."/>
            <person name="Sheng Y."/>
            <person name="Shibata Y."/>
            <person name="Shimada H."/>
            <person name="Shimada K."/>
            <person name="Silva D."/>
            <person name="Sinclair B."/>
            <person name="Sperling S."/>
            <person name="Stupka E."/>
            <person name="Sugiura K."/>
            <person name="Sultana R."/>
            <person name="Takenaka Y."/>
            <person name="Taki K."/>
            <person name="Tammoja K."/>
            <person name="Tan S.L."/>
            <person name="Tang S."/>
            <person name="Taylor M.S."/>
            <person name="Tegner J."/>
            <person name="Teichmann S.A."/>
            <person name="Ueda H.R."/>
            <person name="van Nimwegen E."/>
            <person name="Verardo R."/>
            <person name="Wei C.L."/>
            <person name="Yagi K."/>
            <person name="Yamanishi H."/>
            <person name="Zabarovsky E."/>
            <person name="Zhu S."/>
            <person name="Zimmer A."/>
            <person name="Hide W."/>
            <person name="Bult C."/>
            <person name="Grimmond S.M."/>
            <person name="Teasdale R.D."/>
            <person name="Liu E.T."/>
            <person name="Brusic V."/>
            <person name="Quackenbush J."/>
            <person name="Wahlestedt C."/>
            <person name="Mattick J.S."/>
            <person name="Hume D.A."/>
            <person name="Kai C."/>
            <person name="Sasaki D."/>
            <person name="Tomaru Y."/>
            <person name="Fukuda S."/>
            <person name="Kanamori-Katayama M."/>
            <person name="Suzuki M."/>
            <person name="Aoki J."/>
            <person name="Arakawa T."/>
            <person name="Iida J."/>
            <person name="Imamura K."/>
            <person name="Itoh M."/>
            <person name="Kato T."/>
            <person name="Kawaji H."/>
            <person name="Kawagashira N."/>
            <person name="Kawashima T."/>
            <person name="Kojima M."/>
            <person name="Kondo S."/>
            <person name="Konno H."/>
            <person name="Nakano K."/>
            <person name="Ninomiya N."/>
            <person name="Nishio T."/>
            <person name="Okada M."/>
            <person name="Plessy C."/>
            <person name="Shibata K."/>
            <person name="Shiraki T."/>
            <person name="Suzuki S."/>
            <person name="Tagami M."/>
            <person name="Waki K."/>
            <person name="Watahiki A."/>
            <person name="Okamura-Oho Y."/>
            <person name="Suzuki H."/>
            <person name="Kawai J."/>
            <person name="Hayashizaki Y."/>
        </authorList>
    </citation>
    <scope>NUCLEOTIDE SEQUENCE [LARGE SCALE MRNA]</scope>
    <source>
        <strain>NOD</strain>
    </source>
</reference>
<reference key="3">
    <citation type="journal article" date="2009" name="PLoS Biol.">
        <title>Lineage-specific biology revealed by a finished genome assembly of the mouse.</title>
        <authorList>
            <person name="Church D.M."/>
            <person name="Goodstadt L."/>
            <person name="Hillier L.W."/>
            <person name="Zody M.C."/>
            <person name="Goldstein S."/>
            <person name="She X."/>
            <person name="Bult C.J."/>
            <person name="Agarwala R."/>
            <person name="Cherry J.L."/>
            <person name="DiCuccio M."/>
            <person name="Hlavina W."/>
            <person name="Kapustin Y."/>
            <person name="Meric P."/>
            <person name="Maglott D."/>
            <person name="Birtle Z."/>
            <person name="Marques A.C."/>
            <person name="Graves T."/>
            <person name="Zhou S."/>
            <person name="Teague B."/>
            <person name="Potamousis K."/>
            <person name="Churas C."/>
            <person name="Place M."/>
            <person name="Herschleb J."/>
            <person name="Runnheim R."/>
            <person name="Forrest D."/>
            <person name="Amos-Landgraf J."/>
            <person name="Schwartz D.C."/>
            <person name="Cheng Z."/>
            <person name="Lindblad-Toh K."/>
            <person name="Eichler E.E."/>
            <person name="Ponting C.P."/>
        </authorList>
    </citation>
    <scope>NUCLEOTIDE SEQUENCE [LARGE SCALE GENOMIC DNA]</scope>
    <source>
        <strain>C57BL/6J</strain>
    </source>
</reference>
<reference key="4">
    <citation type="submission" date="2005-07" db="EMBL/GenBank/DDBJ databases">
        <authorList>
            <person name="Mural R.J."/>
            <person name="Adams M.D."/>
            <person name="Myers E.W."/>
            <person name="Smith H.O."/>
            <person name="Venter J.C."/>
        </authorList>
    </citation>
    <scope>NUCLEOTIDE SEQUENCE [LARGE SCALE GENOMIC DNA]</scope>
</reference>
<reference key="5">
    <citation type="journal article" date="2004" name="Genome Res.">
        <title>The status, quality, and expansion of the NIH full-length cDNA project: the Mammalian Gene Collection (MGC).</title>
        <authorList>
            <consortium name="The MGC Project Team"/>
        </authorList>
    </citation>
    <scope>NUCLEOTIDE SEQUENCE [LARGE SCALE MRNA]</scope>
    <source>
        <strain>NMRI</strain>
        <tissue>Mammary tumor</tissue>
    </source>
</reference>
<reference key="6">
    <citation type="journal article" date="2010" name="Cell">
        <title>A tissue-specific atlas of mouse protein phosphorylation and expression.</title>
        <authorList>
            <person name="Huttlin E.L."/>
            <person name="Jedrychowski M.P."/>
            <person name="Elias J.E."/>
            <person name="Goswami T."/>
            <person name="Rad R."/>
            <person name="Beausoleil S.A."/>
            <person name="Villen J."/>
            <person name="Haas W."/>
            <person name="Sowa M.E."/>
            <person name="Gygi S.P."/>
        </authorList>
    </citation>
    <scope>IDENTIFICATION BY MASS SPECTROMETRY [LARGE SCALE ANALYSIS]</scope>
    <source>
        <tissue>Heart</tissue>
        <tissue>Lung</tissue>
        <tissue>Spleen</tissue>
    </source>
</reference>
<proteinExistence type="evidence at protein level"/>